<accession>Q927V0</accession>
<name>RF1_LISIN</name>
<sequence length="358" mass="40723">MYDRLQAVEDRYDELNELLSDPDVVSDPKRLRDLSKEQSGITATVETYREYKNVNEQIDETRELLGEKLDDEMREMAKEEFAELQKEKAELEERLKLLLVPKDPNDDKNVILEIRGAAGGDEAALFAGDLFRMYSKYAESRGWKVEIMDANPTGIGGYKEIIAMMNGNDAFSRMKYENGAHRVQRVPETESGGRIHTSTATVAILPEAEEVEIELHDKDIRTDTFASTGAGGQSVNTTMSAVRLTHIPTGIVVSMQDERSQLKNKDKAMKVLRARVYDKFEREAREEYDANRKSAVGTGDRSERIRTYNYPQNRVTDHRIGLTIQKLDQIMEGKLDEIIDALILEDQTSKLEHLNDAN</sequence>
<keyword id="KW-0963">Cytoplasm</keyword>
<keyword id="KW-0488">Methylation</keyword>
<keyword id="KW-0648">Protein biosynthesis</keyword>
<reference key="1">
    <citation type="journal article" date="2001" name="Science">
        <title>Comparative genomics of Listeria species.</title>
        <authorList>
            <person name="Glaser P."/>
            <person name="Frangeul L."/>
            <person name="Buchrieser C."/>
            <person name="Rusniok C."/>
            <person name="Amend A."/>
            <person name="Baquero F."/>
            <person name="Berche P."/>
            <person name="Bloecker H."/>
            <person name="Brandt P."/>
            <person name="Chakraborty T."/>
            <person name="Charbit A."/>
            <person name="Chetouani F."/>
            <person name="Couve E."/>
            <person name="de Daruvar A."/>
            <person name="Dehoux P."/>
            <person name="Domann E."/>
            <person name="Dominguez-Bernal G."/>
            <person name="Duchaud E."/>
            <person name="Durant L."/>
            <person name="Dussurget O."/>
            <person name="Entian K.-D."/>
            <person name="Fsihi H."/>
            <person name="Garcia-del Portillo F."/>
            <person name="Garrido P."/>
            <person name="Gautier L."/>
            <person name="Goebel W."/>
            <person name="Gomez-Lopez N."/>
            <person name="Hain T."/>
            <person name="Hauf J."/>
            <person name="Jackson D."/>
            <person name="Jones L.-M."/>
            <person name="Kaerst U."/>
            <person name="Kreft J."/>
            <person name="Kuhn M."/>
            <person name="Kunst F."/>
            <person name="Kurapkat G."/>
            <person name="Madueno E."/>
            <person name="Maitournam A."/>
            <person name="Mata Vicente J."/>
            <person name="Ng E."/>
            <person name="Nedjari H."/>
            <person name="Nordsiek G."/>
            <person name="Novella S."/>
            <person name="de Pablos B."/>
            <person name="Perez-Diaz J.-C."/>
            <person name="Purcell R."/>
            <person name="Remmel B."/>
            <person name="Rose M."/>
            <person name="Schlueter T."/>
            <person name="Simoes N."/>
            <person name="Tierrez A."/>
            <person name="Vazquez-Boland J.-A."/>
            <person name="Voss H."/>
            <person name="Wehland J."/>
            <person name="Cossart P."/>
        </authorList>
    </citation>
    <scope>NUCLEOTIDE SEQUENCE [LARGE SCALE GENOMIC DNA]</scope>
    <source>
        <strain>ATCC BAA-680 / CLIP 11262</strain>
    </source>
</reference>
<organism>
    <name type="scientific">Listeria innocua serovar 6a (strain ATCC BAA-680 / CLIP 11262)</name>
    <dbReference type="NCBI Taxonomy" id="272626"/>
    <lineage>
        <taxon>Bacteria</taxon>
        <taxon>Bacillati</taxon>
        <taxon>Bacillota</taxon>
        <taxon>Bacilli</taxon>
        <taxon>Bacillales</taxon>
        <taxon>Listeriaceae</taxon>
        <taxon>Listeria</taxon>
    </lineage>
</organism>
<evidence type="ECO:0000255" key="1">
    <source>
        <dbReference type="HAMAP-Rule" id="MF_00093"/>
    </source>
</evidence>
<proteinExistence type="inferred from homology"/>
<feature type="chain" id="PRO_0000177693" description="Peptide chain release factor 1">
    <location>
        <begin position="1"/>
        <end position="358"/>
    </location>
</feature>
<feature type="modified residue" description="N5-methylglutamine" evidence="1">
    <location>
        <position position="233"/>
    </location>
</feature>
<protein>
    <recommendedName>
        <fullName evidence="1">Peptide chain release factor 1</fullName>
        <shortName evidence="1">RF-1</shortName>
    </recommendedName>
</protein>
<gene>
    <name evidence="1" type="primary">prfA</name>
    <name type="synonym">prf1</name>
    <name type="ordered locus">lin2687</name>
</gene>
<dbReference type="EMBL" id="AL596173">
    <property type="protein sequence ID" value="CAC97913.1"/>
    <property type="molecule type" value="Genomic_DNA"/>
</dbReference>
<dbReference type="PIR" id="AI1767">
    <property type="entry name" value="AI1767"/>
</dbReference>
<dbReference type="RefSeq" id="WP_003764009.1">
    <property type="nucleotide sequence ID" value="NC_003212.1"/>
</dbReference>
<dbReference type="SMR" id="Q927V0"/>
<dbReference type="STRING" id="272626.gene:17567067"/>
<dbReference type="GeneID" id="61190411"/>
<dbReference type="KEGG" id="lin:prf1"/>
<dbReference type="eggNOG" id="COG0216">
    <property type="taxonomic scope" value="Bacteria"/>
</dbReference>
<dbReference type="HOGENOM" id="CLU_036856_0_1_9"/>
<dbReference type="OrthoDB" id="9806673at2"/>
<dbReference type="Proteomes" id="UP000002513">
    <property type="component" value="Chromosome"/>
</dbReference>
<dbReference type="GO" id="GO:0005737">
    <property type="term" value="C:cytoplasm"/>
    <property type="evidence" value="ECO:0007669"/>
    <property type="project" value="UniProtKB-SubCell"/>
</dbReference>
<dbReference type="GO" id="GO:0016149">
    <property type="term" value="F:translation release factor activity, codon specific"/>
    <property type="evidence" value="ECO:0007669"/>
    <property type="project" value="UniProtKB-UniRule"/>
</dbReference>
<dbReference type="FunFam" id="3.30.160.20:FF:000004">
    <property type="entry name" value="Peptide chain release factor 1"/>
    <property type="match status" value="1"/>
</dbReference>
<dbReference type="FunFam" id="3.30.70.1660:FF:000002">
    <property type="entry name" value="Peptide chain release factor 1"/>
    <property type="match status" value="1"/>
</dbReference>
<dbReference type="FunFam" id="3.30.70.1660:FF:000004">
    <property type="entry name" value="Peptide chain release factor 1"/>
    <property type="match status" value="1"/>
</dbReference>
<dbReference type="Gene3D" id="3.30.160.20">
    <property type="match status" value="1"/>
</dbReference>
<dbReference type="Gene3D" id="3.30.70.1660">
    <property type="match status" value="1"/>
</dbReference>
<dbReference type="Gene3D" id="6.10.140.1950">
    <property type="match status" value="1"/>
</dbReference>
<dbReference type="HAMAP" id="MF_00093">
    <property type="entry name" value="Rel_fac_1"/>
    <property type="match status" value="1"/>
</dbReference>
<dbReference type="InterPro" id="IPR005139">
    <property type="entry name" value="PCRF"/>
</dbReference>
<dbReference type="InterPro" id="IPR000352">
    <property type="entry name" value="Pep_chain_release_fac_I"/>
</dbReference>
<dbReference type="InterPro" id="IPR045853">
    <property type="entry name" value="Pep_chain_release_fac_I_sf"/>
</dbReference>
<dbReference type="InterPro" id="IPR050057">
    <property type="entry name" value="Prokaryotic/Mito_RF"/>
</dbReference>
<dbReference type="InterPro" id="IPR004373">
    <property type="entry name" value="RF-1"/>
</dbReference>
<dbReference type="NCBIfam" id="TIGR00019">
    <property type="entry name" value="prfA"/>
    <property type="match status" value="1"/>
</dbReference>
<dbReference type="NCBIfam" id="NF001859">
    <property type="entry name" value="PRK00591.1"/>
    <property type="match status" value="1"/>
</dbReference>
<dbReference type="PANTHER" id="PTHR43804">
    <property type="entry name" value="LD18447P"/>
    <property type="match status" value="1"/>
</dbReference>
<dbReference type="PANTHER" id="PTHR43804:SF7">
    <property type="entry name" value="LD18447P"/>
    <property type="match status" value="1"/>
</dbReference>
<dbReference type="Pfam" id="PF03462">
    <property type="entry name" value="PCRF"/>
    <property type="match status" value="1"/>
</dbReference>
<dbReference type="Pfam" id="PF00472">
    <property type="entry name" value="RF-1"/>
    <property type="match status" value="1"/>
</dbReference>
<dbReference type="SMART" id="SM00937">
    <property type="entry name" value="PCRF"/>
    <property type="match status" value="1"/>
</dbReference>
<dbReference type="SUPFAM" id="SSF75620">
    <property type="entry name" value="Release factor"/>
    <property type="match status" value="1"/>
</dbReference>
<dbReference type="PROSITE" id="PS00745">
    <property type="entry name" value="RF_PROK_I"/>
    <property type="match status" value="1"/>
</dbReference>
<comment type="function">
    <text evidence="1">Peptide chain release factor 1 directs the termination of translation in response to the peptide chain termination codons UAG and UAA.</text>
</comment>
<comment type="subcellular location">
    <subcellularLocation>
        <location evidence="1">Cytoplasm</location>
    </subcellularLocation>
</comment>
<comment type="PTM">
    <text evidence="1">Methylated by PrmC. Methylation increases the termination efficiency of RF1.</text>
</comment>
<comment type="similarity">
    <text evidence="1">Belongs to the prokaryotic/mitochondrial release factor family.</text>
</comment>